<keyword id="KW-0963">Cytoplasm</keyword>
<keyword id="KW-0378">Hydrolase</keyword>
<keyword id="KW-0645">Protease</keyword>
<keyword id="KW-0788">Thiol protease</keyword>
<name>PCP_STRP7</name>
<comment type="function">
    <text evidence="1">Removes 5-oxoproline from various penultimate amino acid residues except L-proline.</text>
</comment>
<comment type="catalytic activity">
    <reaction evidence="1">
        <text>Release of an N-terminal pyroglutamyl group from a polypeptide, the second amino acid generally not being Pro.</text>
        <dbReference type="EC" id="3.4.19.3"/>
    </reaction>
</comment>
<comment type="subunit">
    <text evidence="1">Homotetramer.</text>
</comment>
<comment type="subcellular location">
    <subcellularLocation>
        <location evidence="1">Cytoplasm</location>
    </subcellularLocation>
</comment>
<comment type="similarity">
    <text evidence="1">Belongs to the peptidase C15 family.</text>
</comment>
<reference key="1">
    <citation type="journal article" date="2010" name="Genome Biol.">
        <title>Structure and dynamics of the pan-genome of Streptococcus pneumoniae and closely related species.</title>
        <authorList>
            <person name="Donati C."/>
            <person name="Hiller N.L."/>
            <person name="Tettelin H."/>
            <person name="Muzzi A."/>
            <person name="Croucher N.J."/>
            <person name="Angiuoli S.V."/>
            <person name="Oggioni M."/>
            <person name="Dunning Hotopp J.C."/>
            <person name="Hu F.Z."/>
            <person name="Riley D.R."/>
            <person name="Covacci A."/>
            <person name="Mitchell T.J."/>
            <person name="Bentley S.D."/>
            <person name="Kilian M."/>
            <person name="Ehrlich G.D."/>
            <person name="Rappuoli R."/>
            <person name="Moxon E.R."/>
            <person name="Masignani V."/>
        </authorList>
    </citation>
    <scope>NUCLEOTIDE SEQUENCE [LARGE SCALE GENOMIC DNA]</scope>
    <source>
        <strain>70585</strain>
    </source>
</reference>
<accession>C1C6J3</accession>
<protein>
    <recommendedName>
        <fullName evidence="1">Pyrrolidone-carboxylate peptidase</fullName>
        <ecNumber evidence="1">3.4.19.3</ecNumber>
    </recommendedName>
    <alternativeName>
        <fullName evidence="1">5-oxoprolyl-peptidase</fullName>
    </alternativeName>
    <alternativeName>
        <fullName evidence="1">Pyroglutamyl-peptidase I</fullName>
        <shortName evidence="1">PGP-I</shortName>
        <shortName evidence="1">Pyrase</shortName>
    </alternativeName>
</protein>
<gene>
    <name evidence="1" type="primary">pcp</name>
    <name type="ordered locus">SP70585_0895</name>
</gene>
<proteinExistence type="inferred from homology"/>
<feature type="chain" id="PRO_1000192225" description="Pyrrolidone-carboxylate peptidase">
    <location>
        <begin position="1"/>
        <end position="214"/>
    </location>
</feature>
<feature type="active site" evidence="1">
    <location>
        <position position="78"/>
    </location>
</feature>
<feature type="active site" evidence="1">
    <location>
        <position position="141"/>
    </location>
</feature>
<feature type="active site" evidence="1">
    <location>
        <position position="165"/>
    </location>
</feature>
<sequence length="214" mass="23450">MKILVTGFNPFGSEKINPALEAVKLLPSEINGAEVRWVEIPTVFYKSSEVLEAEILRYQPDAVLCIGQAGGRTGLTPERVAINQDDARIPDNEGNQPIDTPIRIDGASAYFSSLPIKAMVQAIKKQGLPAVVSNSAGTFVCNHLMYQALYLVDKKFPNMRAGFMHIPYMMEQVVNKPNTAGMSLCDIVRGIEVAIEAIVDYKDKDLQLVGGETH</sequence>
<evidence type="ECO:0000255" key="1">
    <source>
        <dbReference type="HAMAP-Rule" id="MF_00417"/>
    </source>
</evidence>
<dbReference type="EC" id="3.4.19.3" evidence="1"/>
<dbReference type="EMBL" id="CP000918">
    <property type="protein sequence ID" value="ACO15991.1"/>
    <property type="molecule type" value="Genomic_DNA"/>
</dbReference>
<dbReference type="RefSeq" id="WP_000699371.1">
    <property type="nucleotide sequence ID" value="NC_012468.1"/>
</dbReference>
<dbReference type="SMR" id="C1C6J3"/>
<dbReference type="MEROPS" id="C15.001"/>
<dbReference type="KEGG" id="snm:SP70585_0895"/>
<dbReference type="HOGENOM" id="CLU_043960_4_0_9"/>
<dbReference type="Proteomes" id="UP000002211">
    <property type="component" value="Chromosome"/>
</dbReference>
<dbReference type="GO" id="GO:0005829">
    <property type="term" value="C:cytosol"/>
    <property type="evidence" value="ECO:0007669"/>
    <property type="project" value="InterPro"/>
</dbReference>
<dbReference type="GO" id="GO:0016920">
    <property type="term" value="F:pyroglutamyl-peptidase activity"/>
    <property type="evidence" value="ECO:0007669"/>
    <property type="project" value="UniProtKB-UniRule"/>
</dbReference>
<dbReference type="GO" id="GO:0006508">
    <property type="term" value="P:proteolysis"/>
    <property type="evidence" value="ECO:0007669"/>
    <property type="project" value="UniProtKB-KW"/>
</dbReference>
<dbReference type="CDD" id="cd00501">
    <property type="entry name" value="Peptidase_C15"/>
    <property type="match status" value="1"/>
</dbReference>
<dbReference type="FunFam" id="3.40.630.20:FF:000001">
    <property type="entry name" value="Pyrrolidone-carboxylate peptidase"/>
    <property type="match status" value="1"/>
</dbReference>
<dbReference type="Gene3D" id="3.40.630.20">
    <property type="entry name" value="Peptidase C15, pyroglutamyl peptidase I-like"/>
    <property type="match status" value="1"/>
</dbReference>
<dbReference type="HAMAP" id="MF_00417">
    <property type="entry name" value="Pyrrolid_peptidase"/>
    <property type="match status" value="1"/>
</dbReference>
<dbReference type="InterPro" id="IPR000816">
    <property type="entry name" value="Peptidase_C15"/>
</dbReference>
<dbReference type="InterPro" id="IPR016125">
    <property type="entry name" value="Peptidase_C15-like"/>
</dbReference>
<dbReference type="InterPro" id="IPR036440">
    <property type="entry name" value="Peptidase_C15-like_sf"/>
</dbReference>
<dbReference type="InterPro" id="IPR029762">
    <property type="entry name" value="PGP-I_bact-type"/>
</dbReference>
<dbReference type="InterPro" id="IPR033694">
    <property type="entry name" value="PGPEP1_Cys_AS"/>
</dbReference>
<dbReference type="InterPro" id="IPR033693">
    <property type="entry name" value="PGPEP1_Glu_AS"/>
</dbReference>
<dbReference type="NCBIfam" id="NF009676">
    <property type="entry name" value="PRK13197.1"/>
    <property type="match status" value="1"/>
</dbReference>
<dbReference type="NCBIfam" id="TIGR00504">
    <property type="entry name" value="pyro_pdase"/>
    <property type="match status" value="1"/>
</dbReference>
<dbReference type="PANTHER" id="PTHR23402">
    <property type="entry name" value="PROTEASE FAMILY C15 PYROGLUTAMYL-PEPTIDASE I-RELATED"/>
    <property type="match status" value="1"/>
</dbReference>
<dbReference type="PANTHER" id="PTHR23402:SF1">
    <property type="entry name" value="PYROGLUTAMYL-PEPTIDASE I"/>
    <property type="match status" value="1"/>
</dbReference>
<dbReference type="Pfam" id="PF01470">
    <property type="entry name" value="Peptidase_C15"/>
    <property type="match status" value="1"/>
</dbReference>
<dbReference type="PIRSF" id="PIRSF015592">
    <property type="entry name" value="Prld-crbxl_pptds"/>
    <property type="match status" value="1"/>
</dbReference>
<dbReference type="PRINTS" id="PR00706">
    <property type="entry name" value="PYROGLUPTASE"/>
</dbReference>
<dbReference type="SUPFAM" id="SSF53182">
    <property type="entry name" value="Pyrrolidone carboxyl peptidase (pyroglutamate aminopeptidase)"/>
    <property type="match status" value="1"/>
</dbReference>
<dbReference type="PROSITE" id="PS01334">
    <property type="entry name" value="PYRASE_CYS"/>
    <property type="match status" value="1"/>
</dbReference>
<dbReference type="PROSITE" id="PS01333">
    <property type="entry name" value="PYRASE_GLU"/>
    <property type="match status" value="1"/>
</dbReference>
<organism>
    <name type="scientific">Streptococcus pneumoniae (strain 70585)</name>
    <dbReference type="NCBI Taxonomy" id="488221"/>
    <lineage>
        <taxon>Bacteria</taxon>
        <taxon>Bacillati</taxon>
        <taxon>Bacillota</taxon>
        <taxon>Bacilli</taxon>
        <taxon>Lactobacillales</taxon>
        <taxon>Streptococcaceae</taxon>
        <taxon>Streptococcus</taxon>
    </lineage>
</organism>